<gene>
    <name type="ordered locus">At1g31400</name>
    <name type="ORF">T19E23.18</name>
    <name type="ORF">T8E3.21</name>
</gene>
<name>MCC02_ARATH</name>
<sequence>MADQYEKRITWTIKNFSSLQSHAIYFDIFVVGDTKWHLLAYPKGYGDSINKCLSLFLGVPDPDDLPSGWKRHIIYRLTVVNQMSEKLSKQEVARGGFYPRSLTFGSQVMLPLTELYGGFLVSGQVKIVAEVGVLEVVGKSDVLEETLLVNGGINVNGFQVLPSQVESVNNLFKNHPDIASNFRLENTHLRTTYLNSLLCLTELLCQSPHKLSNVDLANAHCTLTCVTKAGFKLDWLEKKLKEVGKTRMQQLEQNLKDLKESLCWSSDDEDDLSRSVKT</sequence>
<dbReference type="EMBL" id="AC007654">
    <property type="protein sequence ID" value="AAF24591.1"/>
    <property type="status" value="ALT_SEQ"/>
    <property type="molecule type" value="Genomic_DNA"/>
</dbReference>
<dbReference type="EMBL" id="AC027135">
    <property type="protein sequence ID" value="AAG51272.1"/>
    <property type="molecule type" value="Genomic_DNA"/>
</dbReference>
<dbReference type="EMBL" id="CP002684">
    <property type="protein sequence ID" value="AEE31351.1"/>
    <property type="molecule type" value="Genomic_DNA"/>
</dbReference>
<dbReference type="EMBL" id="DQ056471">
    <property type="protein sequence ID" value="AAY78628.1"/>
    <property type="molecule type" value="mRNA"/>
</dbReference>
<dbReference type="PIR" id="H86439">
    <property type="entry name" value="H86439"/>
</dbReference>
<dbReference type="RefSeq" id="NP_174425.1">
    <property type="nucleotide sequence ID" value="NM_102879.2"/>
</dbReference>
<dbReference type="SMR" id="Q9C869"/>
<dbReference type="FunCoup" id="Q9C869">
    <property type="interactions" value="34"/>
</dbReference>
<dbReference type="STRING" id="3702.Q9C869"/>
<dbReference type="PaxDb" id="3702-AT1G31400.1"/>
<dbReference type="EnsemblPlants" id="AT1G31400.1">
    <property type="protein sequence ID" value="AT1G31400.1"/>
    <property type="gene ID" value="AT1G31400"/>
</dbReference>
<dbReference type="GeneID" id="840030"/>
<dbReference type="Gramene" id="AT1G31400.1">
    <property type="protein sequence ID" value="AT1G31400.1"/>
    <property type="gene ID" value="AT1G31400"/>
</dbReference>
<dbReference type="KEGG" id="ath:AT1G31400"/>
<dbReference type="Araport" id="AT1G31400"/>
<dbReference type="TAIR" id="AT1G31400"/>
<dbReference type="eggNOG" id="KOG1987">
    <property type="taxonomic scope" value="Eukaryota"/>
</dbReference>
<dbReference type="HOGENOM" id="CLU_026537_0_0_1"/>
<dbReference type="InParanoid" id="Q9C869"/>
<dbReference type="OMA" id="DLANAHC"/>
<dbReference type="PhylomeDB" id="Q9C869"/>
<dbReference type="PRO" id="PR:Q9C869"/>
<dbReference type="Proteomes" id="UP000006548">
    <property type="component" value="Chromosome 1"/>
</dbReference>
<dbReference type="ExpressionAtlas" id="Q9C869">
    <property type="expression patterns" value="baseline and differential"/>
</dbReference>
<dbReference type="CDD" id="cd00121">
    <property type="entry name" value="MATH"/>
    <property type="match status" value="1"/>
</dbReference>
<dbReference type="Gene3D" id="2.60.210.10">
    <property type="entry name" value="Apoptosis, Tumor Necrosis Factor Receptor Associated Protein 2, Chain A"/>
    <property type="match status" value="1"/>
</dbReference>
<dbReference type="InterPro" id="IPR050804">
    <property type="entry name" value="MATH-CC_domain_protein"/>
</dbReference>
<dbReference type="InterPro" id="IPR002083">
    <property type="entry name" value="MATH/TRAF_dom"/>
</dbReference>
<dbReference type="InterPro" id="IPR008974">
    <property type="entry name" value="TRAF-like"/>
</dbReference>
<dbReference type="PANTHER" id="PTHR46236:SF21">
    <property type="entry name" value="TRAF-LIKE FAMILY PROTEIN-RELATED"/>
    <property type="match status" value="1"/>
</dbReference>
<dbReference type="PANTHER" id="PTHR46236">
    <property type="entry name" value="TRAF-LIKE SUPERFAMILY PROTEIN"/>
    <property type="match status" value="1"/>
</dbReference>
<dbReference type="Pfam" id="PF22486">
    <property type="entry name" value="MATH_2"/>
    <property type="match status" value="1"/>
</dbReference>
<dbReference type="SMART" id="SM00061">
    <property type="entry name" value="MATH"/>
    <property type="match status" value="1"/>
</dbReference>
<dbReference type="SUPFAM" id="SSF49599">
    <property type="entry name" value="TRAF domain-like"/>
    <property type="match status" value="1"/>
</dbReference>
<dbReference type="PROSITE" id="PS50144">
    <property type="entry name" value="MATH"/>
    <property type="match status" value="1"/>
</dbReference>
<proteinExistence type="evidence at transcript level"/>
<protein>
    <recommendedName>
        <fullName>MATH domain and coiled-coil domain-containing protein At1g31400</fullName>
    </recommendedName>
    <alternativeName>
        <fullName>RTM3-like protein At1g31400</fullName>
    </alternativeName>
</protein>
<evidence type="ECO:0000255" key="1"/>
<evidence type="ECO:0000255" key="2">
    <source>
        <dbReference type="PROSITE-ProRule" id="PRU00129"/>
    </source>
</evidence>
<evidence type="ECO:0000305" key="3"/>
<organism>
    <name type="scientific">Arabidopsis thaliana</name>
    <name type="common">Mouse-ear cress</name>
    <dbReference type="NCBI Taxonomy" id="3702"/>
    <lineage>
        <taxon>Eukaryota</taxon>
        <taxon>Viridiplantae</taxon>
        <taxon>Streptophyta</taxon>
        <taxon>Embryophyta</taxon>
        <taxon>Tracheophyta</taxon>
        <taxon>Spermatophyta</taxon>
        <taxon>Magnoliopsida</taxon>
        <taxon>eudicotyledons</taxon>
        <taxon>Gunneridae</taxon>
        <taxon>Pentapetalae</taxon>
        <taxon>rosids</taxon>
        <taxon>malvids</taxon>
        <taxon>Brassicales</taxon>
        <taxon>Brassicaceae</taxon>
        <taxon>Camelineae</taxon>
        <taxon>Arabidopsis</taxon>
    </lineage>
</organism>
<accession>Q9C869</accession>
<accession>Q9SHE2</accession>
<keyword id="KW-0175">Coiled coil</keyword>
<keyword id="KW-1185">Reference proteome</keyword>
<feature type="chain" id="PRO_0000429279" description="MATH domain and coiled-coil domain-containing protein At1g31400">
    <location>
        <begin position="1"/>
        <end position="278"/>
    </location>
</feature>
<feature type="domain" description="MATH" evidence="2">
    <location>
        <begin position="6"/>
        <end position="131"/>
    </location>
</feature>
<feature type="coiled-coil region" evidence="1">
    <location>
        <begin position="232"/>
        <end position="267"/>
    </location>
</feature>
<reference key="1">
    <citation type="journal article" date="2000" name="Nature">
        <title>Sequence and analysis of chromosome 1 of the plant Arabidopsis thaliana.</title>
        <authorList>
            <person name="Theologis A."/>
            <person name="Ecker J.R."/>
            <person name="Palm C.J."/>
            <person name="Federspiel N.A."/>
            <person name="Kaul S."/>
            <person name="White O."/>
            <person name="Alonso J."/>
            <person name="Altafi H."/>
            <person name="Araujo R."/>
            <person name="Bowman C.L."/>
            <person name="Brooks S.Y."/>
            <person name="Buehler E."/>
            <person name="Chan A."/>
            <person name="Chao Q."/>
            <person name="Chen H."/>
            <person name="Cheuk R.F."/>
            <person name="Chin C.W."/>
            <person name="Chung M.K."/>
            <person name="Conn L."/>
            <person name="Conway A.B."/>
            <person name="Conway A.R."/>
            <person name="Creasy T.H."/>
            <person name="Dewar K."/>
            <person name="Dunn P."/>
            <person name="Etgu P."/>
            <person name="Feldblyum T.V."/>
            <person name="Feng J.-D."/>
            <person name="Fong B."/>
            <person name="Fujii C.Y."/>
            <person name="Gill J.E."/>
            <person name="Goldsmith A.D."/>
            <person name="Haas B."/>
            <person name="Hansen N.F."/>
            <person name="Hughes B."/>
            <person name="Huizar L."/>
            <person name="Hunter J.L."/>
            <person name="Jenkins J."/>
            <person name="Johnson-Hopson C."/>
            <person name="Khan S."/>
            <person name="Khaykin E."/>
            <person name="Kim C.J."/>
            <person name="Koo H.L."/>
            <person name="Kremenetskaia I."/>
            <person name="Kurtz D.B."/>
            <person name="Kwan A."/>
            <person name="Lam B."/>
            <person name="Langin-Hooper S."/>
            <person name="Lee A."/>
            <person name="Lee J.M."/>
            <person name="Lenz C.A."/>
            <person name="Li J.H."/>
            <person name="Li Y.-P."/>
            <person name="Lin X."/>
            <person name="Liu S.X."/>
            <person name="Liu Z.A."/>
            <person name="Luros J.S."/>
            <person name="Maiti R."/>
            <person name="Marziali A."/>
            <person name="Militscher J."/>
            <person name="Miranda M."/>
            <person name="Nguyen M."/>
            <person name="Nierman W.C."/>
            <person name="Osborne B.I."/>
            <person name="Pai G."/>
            <person name="Peterson J."/>
            <person name="Pham P.K."/>
            <person name="Rizzo M."/>
            <person name="Rooney T."/>
            <person name="Rowley D."/>
            <person name="Sakano H."/>
            <person name="Salzberg S.L."/>
            <person name="Schwartz J.R."/>
            <person name="Shinn P."/>
            <person name="Southwick A.M."/>
            <person name="Sun H."/>
            <person name="Tallon L.J."/>
            <person name="Tambunga G."/>
            <person name="Toriumi M.J."/>
            <person name="Town C.D."/>
            <person name="Utterback T."/>
            <person name="Van Aken S."/>
            <person name="Vaysberg M."/>
            <person name="Vysotskaia V.S."/>
            <person name="Walker M."/>
            <person name="Wu D."/>
            <person name="Yu G."/>
            <person name="Fraser C.M."/>
            <person name="Venter J.C."/>
            <person name="Davis R.W."/>
        </authorList>
    </citation>
    <scope>NUCLEOTIDE SEQUENCE [LARGE SCALE GENOMIC DNA]</scope>
    <source>
        <strain>cv. Columbia</strain>
    </source>
</reference>
<reference key="2">
    <citation type="journal article" date="2017" name="Plant J.">
        <title>Araport11: a complete reannotation of the Arabidopsis thaliana reference genome.</title>
        <authorList>
            <person name="Cheng C.Y."/>
            <person name="Krishnakumar V."/>
            <person name="Chan A.P."/>
            <person name="Thibaud-Nissen F."/>
            <person name="Schobel S."/>
            <person name="Town C.D."/>
        </authorList>
    </citation>
    <scope>GENOME REANNOTATION</scope>
    <source>
        <strain>cv. Columbia</strain>
    </source>
</reference>
<reference key="3">
    <citation type="submission" date="2005-05" db="EMBL/GenBank/DDBJ databases">
        <authorList>
            <person name="Underwood B.A."/>
            <person name="Xiao Y.-L."/>
            <person name="Moskal W.A. Jr."/>
            <person name="Monaghan E.L."/>
            <person name="Wang W."/>
            <person name="Redman J.C."/>
            <person name="Wu H.C."/>
            <person name="Utterback T."/>
            <person name="Town C.D."/>
        </authorList>
    </citation>
    <scope>NUCLEOTIDE SEQUENCE [LARGE SCALE MRNA]</scope>
    <source>
        <strain>cv. Columbia</strain>
    </source>
</reference>
<reference key="4">
    <citation type="journal article" date="2010" name="Plant Physiol.">
        <title>RTM3, which controls long-distance movement of potyviruses, is a member of a new plant gene family encoding a meprin and TRAF homology domain-containing protein.</title>
        <authorList>
            <person name="Cosson P."/>
            <person name="Sofer L."/>
            <person name="Le Q.H."/>
            <person name="Leger V."/>
            <person name="Schurdi-Levraud V."/>
            <person name="Whitham S.A."/>
            <person name="Yamamoto M.L."/>
            <person name="Gopalan S."/>
            <person name="Le Gall O."/>
            <person name="Candresse T."/>
            <person name="Carrington J.C."/>
            <person name="Revers F."/>
        </authorList>
    </citation>
    <scope>GENE FAMILY</scope>
</reference>
<comment type="sequence caution" evidence="3">
    <conflict type="erroneous gene model prediction">
        <sequence resource="EMBL-CDS" id="AAF24591"/>
    </conflict>
    <text>The predicted gene has been split into 2 genes: At1g31390 and At1g31400.</text>
</comment>